<organism>
    <name type="scientific">Dictyoglomus thermophilum (strain ATCC 35947 / DSM 3960 / H-6-12)</name>
    <dbReference type="NCBI Taxonomy" id="309799"/>
    <lineage>
        <taxon>Bacteria</taxon>
        <taxon>Pseudomonadati</taxon>
        <taxon>Dictyoglomota</taxon>
        <taxon>Dictyoglomia</taxon>
        <taxon>Dictyoglomales</taxon>
        <taxon>Dictyoglomaceae</taxon>
        <taxon>Dictyoglomus</taxon>
    </lineage>
</organism>
<sequence length="246" mass="28308">MAHILMKQLLEAGVHFGHQTKRWCPKMKEYIFSERNGIHIIDLQKTLVKLEEAYEFAKEQAKEGKTFLFVGTKKQAQQTIEEEAKRCGAFYVNQRWLGGMLTNFTTIKSRIDYMVKLEELKNNGYFEKLPKKQANRLNRELEKLVKVFDGLRGIEKLPDVLYIVDPKREEIAVKEANKLGIPIIAIVDTNCDPELITYPIPGNDDAIRSIKLITSKIADAILEGKDLREKEADLQLKDEDLQSEIS</sequence>
<name>RS2_DICT6</name>
<comment type="similarity">
    <text evidence="1">Belongs to the universal ribosomal protein uS2 family.</text>
</comment>
<accession>B5YEG9</accession>
<protein>
    <recommendedName>
        <fullName evidence="1">Small ribosomal subunit protein uS2</fullName>
    </recommendedName>
    <alternativeName>
        <fullName evidence="2">30S ribosomal protein S2</fullName>
    </alternativeName>
</protein>
<keyword id="KW-0687">Ribonucleoprotein</keyword>
<keyword id="KW-0689">Ribosomal protein</keyword>
<dbReference type="EMBL" id="CP001146">
    <property type="protein sequence ID" value="ACI18465.1"/>
    <property type="molecule type" value="Genomic_DNA"/>
</dbReference>
<dbReference type="RefSeq" id="WP_012547097.1">
    <property type="nucleotide sequence ID" value="NC_011297.1"/>
</dbReference>
<dbReference type="SMR" id="B5YEG9"/>
<dbReference type="STRING" id="309799.DICTH_1078"/>
<dbReference type="PaxDb" id="309799-DICTH_1078"/>
<dbReference type="KEGG" id="dth:DICTH_1078"/>
<dbReference type="eggNOG" id="COG0052">
    <property type="taxonomic scope" value="Bacteria"/>
</dbReference>
<dbReference type="HOGENOM" id="CLU_040318_1_2_0"/>
<dbReference type="OrthoDB" id="9808036at2"/>
<dbReference type="Proteomes" id="UP000001733">
    <property type="component" value="Chromosome"/>
</dbReference>
<dbReference type="GO" id="GO:0022627">
    <property type="term" value="C:cytosolic small ribosomal subunit"/>
    <property type="evidence" value="ECO:0007669"/>
    <property type="project" value="TreeGrafter"/>
</dbReference>
<dbReference type="GO" id="GO:0003735">
    <property type="term" value="F:structural constituent of ribosome"/>
    <property type="evidence" value="ECO:0007669"/>
    <property type="project" value="InterPro"/>
</dbReference>
<dbReference type="GO" id="GO:0006412">
    <property type="term" value="P:translation"/>
    <property type="evidence" value="ECO:0007669"/>
    <property type="project" value="UniProtKB-UniRule"/>
</dbReference>
<dbReference type="CDD" id="cd01425">
    <property type="entry name" value="RPS2"/>
    <property type="match status" value="1"/>
</dbReference>
<dbReference type="FunFam" id="1.10.287.610:FF:000001">
    <property type="entry name" value="30S ribosomal protein S2"/>
    <property type="match status" value="1"/>
</dbReference>
<dbReference type="Gene3D" id="3.40.50.10490">
    <property type="entry name" value="Glucose-6-phosphate isomerase like protein, domain 1"/>
    <property type="match status" value="1"/>
</dbReference>
<dbReference type="Gene3D" id="1.10.287.610">
    <property type="entry name" value="Helix hairpin bin"/>
    <property type="match status" value="1"/>
</dbReference>
<dbReference type="HAMAP" id="MF_00291_B">
    <property type="entry name" value="Ribosomal_uS2_B"/>
    <property type="match status" value="1"/>
</dbReference>
<dbReference type="InterPro" id="IPR001865">
    <property type="entry name" value="Ribosomal_uS2"/>
</dbReference>
<dbReference type="InterPro" id="IPR005706">
    <property type="entry name" value="Ribosomal_uS2_bac/mit/plastid"/>
</dbReference>
<dbReference type="InterPro" id="IPR018130">
    <property type="entry name" value="Ribosomal_uS2_CS"/>
</dbReference>
<dbReference type="InterPro" id="IPR023591">
    <property type="entry name" value="Ribosomal_uS2_flav_dom_sf"/>
</dbReference>
<dbReference type="NCBIfam" id="TIGR01011">
    <property type="entry name" value="rpsB_bact"/>
    <property type="match status" value="1"/>
</dbReference>
<dbReference type="PANTHER" id="PTHR12534">
    <property type="entry name" value="30S RIBOSOMAL PROTEIN S2 PROKARYOTIC AND ORGANELLAR"/>
    <property type="match status" value="1"/>
</dbReference>
<dbReference type="PANTHER" id="PTHR12534:SF0">
    <property type="entry name" value="SMALL RIBOSOMAL SUBUNIT PROTEIN US2M"/>
    <property type="match status" value="1"/>
</dbReference>
<dbReference type="Pfam" id="PF00318">
    <property type="entry name" value="Ribosomal_S2"/>
    <property type="match status" value="1"/>
</dbReference>
<dbReference type="PRINTS" id="PR00395">
    <property type="entry name" value="RIBOSOMALS2"/>
</dbReference>
<dbReference type="SUPFAM" id="SSF52313">
    <property type="entry name" value="Ribosomal protein S2"/>
    <property type="match status" value="1"/>
</dbReference>
<dbReference type="PROSITE" id="PS00962">
    <property type="entry name" value="RIBOSOMAL_S2_1"/>
    <property type="match status" value="1"/>
</dbReference>
<proteinExistence type="inferred from homology"/>
<reference key="1">
    <citation type="journal article" date="2014" name="Genome Announc.">
        <title>Complete Genome Sequence of the Extreme Thermophile Dictyoglomus thermophilum H-6-12.</title>
        <authorList>
            <person name="Coil D.A."/>
            <person name="Badger J.H."/>
            <person name="Forberger H.C."/>
            <person name="Riggs F."/>
            <person name="Madupu R."/>
            <person name="Fedorova N."/>
            <person name="Ward N."/>
            <person name="Robb F.T."/>
            <person name="Eisen J.A."/>
        </authorList>
    </citation>
    <scope>NUCLEOTIDE SEQUENCE [LARGE SCALE GENOMIC DNA]</scope>
    <source>
        <strain>ATCC 35947 / DSM 3960 / H-6-12</strain>
    </source>
</reference>
<feature type="chain" id="PRO_1000115015" description="Small ribosomal subunit protein uS2">
    <location>
        <begin position="1"/>
        <end position="246"/>
    </location>
</feature>
<gene>
    <name evidence="1" type="primary">rpsB</name>
    <name type="ordered locus">DICTH_1078</name>
</gene>
<evidence type="ECO:0000255" key="1">
    <source>
        <dbReference type="HAMAP-Rule" id="MF_00291"/>
    </source>
</evidence>
<evidence type="ECO:0000305" key="2"/>